<keyword id="KW-0963">Cytoplasm</keyword>
<keyword id="KW-0444">Lipid biosynthesis</keyword>
<keyword id="KW-0443">Lipid metabolism</keyword>
<keyword id="KW-0520">NAD</keyword>
<keyword id="KW-0521">NADP</keyword>
<keyword id="KW-0547">Nucleotide-binding</keyword>
<keyword id="KW-0560">Oxidoreductase</keyword>
<keyword id="KW-0594">Phospholipid biosynthesis</keyword>
<keyword id="KW-1208">Phospholipid metabolism</keyword>
<protein>
    <recommendedName>
        <fullName evidence="1">Glycerol-3-phosphate dehydrogenase [NAD(P)+]</fullName>
        <ecNumber evidence="1">1.1.1.94</ecNumber>
    </recommendedName>
    <alternativeName>
        <fullName evidence="1">NAD(P)(+)-dependent glycerol-3-phosphate dehydrogenase</fullName>
    </alternativeName>
    <alternativeName>
        <fullName evidence="1">NAD(P)H-dependent dihydroxyacetone-phosphate reductase</fullName>
    </alternativeName>
</protein>
<name>GPDA_DEHMB</name>
<organism>
    <name type="scientific">Dehalococcoides mccartyi (strain ATCC BAA-2100 / JCM 16839 / KCTC 5957 / BAV1)</name>
    <dbReference type="NCBI Taxonomy" id="216389"/>
    <lineage>
        <taxon>Bacteria</taxon>
        <taxon>Bacillati</taxon>
        <taxon>Chloroflexota</taxon>
        <taxon>Dehalococcoidia</taxon>
        <taxon>Dehalococcoidales</taxon>
        <taxon>Dehalococcoidaceae</taxon>
        <taxon>Dehalococcoides</taxon>
    </lineage>
</organism>
<sequence length="359" mass="38505">MSKVCIIGTTTWGITLGTIIAHKGREVMLWARTEDEAVLLSTQRRPADFLPENYHFPEFMNVTASLEEAIAGADMVLLAVPSQRMRPNIRLVAPLLTKSMLICSAAKGLEIGTAKRMSQVITDEISPDFAKNICVLSGPNLAMEILKGLPAVTVLAADTEKTAKKAAKLITAANFSAYTNTDIIGVELGGSLKNIIALGAGIVDGLNLGNNAKSALITRGLTEISALGAALGANPLTLSGLAGLGDLIATCSSNLSRNHFVGVELTKGRSLNDIMYNMSNVAEGVSTTAVAYEMARSMDLEMPVTENIYNVLYNNADPKEAARILMDAQATHELAGRKWNLFKMFRKRKARKTPELNPD</sequence>
<reference key="1">
    <citation type="submission" date="2007-05" db="EMBL/GenBank/DDBJ databases">
        <title>Complete sequence of Dehalococcoides sp. BAV1.</title>
        <authorList>
            <consortium name="US DOE Joint Genome Institute"/>
            <person name="Copeland A."/>
            <person name="Lucas S."/>
            <person name="Lapidus A."/>
            <person name="Barry K."/>
            <person name="Detter J.C."/>
            <person name="Glavina del Rio T."/>
            <person name="Hammon N."/>
            <person name="Israni S."/>
            <person name="Pitluck S."/>
            <person name="Lowry S."/>
            <person name="Clum A."/>
            <person name="Schmutz J."/>
            <person name="Larimer F."/>
            <person name="Land M."/>
            <person name="Hauser L."/>
            <person name="Kyrpides N."/>
            <person name="Kim E."/>
            <person name="Ritalahti K.M."/>
            <person name="Loeffler F."/>
            <person name="Richardson P."/>
        </authorList>
    </citation>
    <scope>NUCLEOTIDE SEQUENCE [LARGE SCALE GENOMIC DNA]</scope>
    <source>
        <strain>ATCC BAA-2100 / JCM 16839 / KCTC 5957 / BAV1</strain>
    </source>
</reference>
<evidence type="ECO:0000255" key="1">
    <source>
        <dbReference type="HAMAP-Rule" id="MF_00394"/>
    </source>
</evidence>
<comment type="function">
    <text evidence="1">Catalyzes the reduction of the glycolytic intermediate dihydroxyacetone phosphate (DHAP) to sn-glycerol 3-phosphate (G3P), the key precursor for phospholipid synthesis.</text>
</comment>
<comment type="catalytic activity">
    <reaction evidence="1">
        <text>sn-glycerol 3-phosphate + NAD(+) = dihydroxyacetone phosphate + NADH + H(+)</text>
        <dbReference type="Rhea" id="RHEA:11092"/>
        <dbReference type="ChEBI" id="CHEBI:15378"/>
        <dbReference type="ChEBI" id="CHEBI:57540"/>
        <dbReference type="ChEBI" id="CHEBI:57597"/>
        <dbReference type="ChEBI" id="CHEBI:57642"/>
        <dbReference type="ChEBI" id="CHEBI:57945"/>
        <dbReference type="EC" id="1.1.1.94"/>
    </reaction>
    <physiologicalReaction direction="right-to-left" evidence="1">
        <dbReference type="Rhea" id="RHEA:11094"/>
    </physiologicalReaction>
</comment>
<comment type="catalytic activity">
    <reaction evidence="1">
        <text>sn-glycerol 3-phosphate + NADP(+) = dihydroxyacetone phosphate + NADPH + H(+)</text>
        <dbReference type="Rhea" id="RHEA:11096"/>
        <dbReference type="ChEBI" id="CHEBI:15378"/>
        <dbReference type="ChEBI" id="CHEBI:57597"/>
        <dbReference type="ChEBI" id="CHEBI:57642"/>
        <dbReference type="ChEBI" id="CHEBI:57783"/>
        <dbReference type="ChEBI" id="CHEBI:58349"/>
        <dbReference type="EC" id="1.1.1.94"/>
    </reaction>
    <physiologicalReaction direction="right-to-left" evidence="1">
        <dbReference type="Rhea" id="RHEA:11098"/>
    </physiologicalReaction>
</comment>
<comment type="pathway">
    <text evidence="1">Membrane lipid metabolism; glycerophospholipid metabolism.</text>
</comment>
<comment type="subcellular location">
    <subcellularLocation>
        <location evidence="1">Cytoplasm</location>
    </subcellularLocation>
</comment>
<comment type="similarity">
    <text evidence="1">Belongs to the NAD-dependent glycerol-3-phosphate dehydrogenase family.</text>
</comment>
<proteinExistence type="inferred from homology"/>
<gene>
    <name evidence="1" type="primary">gpsA</name>
    <name type="ordered locus">DehaBAV1_1206</name>
</gene>
<dbReference type="EC" id="1.1.1.94" evidence="1"/>
<dbReference type="EMBL" id="CP000688">
    <property type="protein sequence ID" value="ABQ17785.1"/>
    <property type="molecule type" value="Genomic_DNA"/>
</dbReference>
<dbReference type="SMR" id="A5FPU2"/>
<dbReference type="KEGG" id="deb:DehaBAV1_1206"/>
<dbReference type="PATRIC" id="fig|216389.18.peg.1273"/>
<dbReference type="HOGENOM" id="CLU_033449_0_2_0"/>
<dbReference type="UniPathway" id="UPA00940"/>
<dbReference type="GO" id="GO:0005829">
    <property type="term" value="C:cytosol"/>
    <property type="evidence" value="ECO:0007669"/>
    <property type="project" value="TreeGrafter"/>
</dbReference>
<dbReference type="GO" id="GO:0047952">
    <property type="term" value="F:glycerol-3-phosphate dehydrogenase [NAD(P)+] activity"/>
    <property type="evidence" value="ECO:0007669"/>
    <property type="project" value="UniProtKB-UniRule"/>
</dbReference>
<dbReference type="GO" id="GO:0051287">
    <property type="term" value="F:NAD binding"/>
    <property type="evidence" value="ECO:0007669"/>
    <property type="project" value="InterPro"/>
</dbReference>
<dbReference type="GO" id="GO:0005975">
    <property type="term" value="P:carbohydrate metabolic process"/>
    <property type="evidence" value="ECO:0007669"/>
    <property type="project" value="InterPro"/>
</dbReference>
<dbReference type="GO" id="GO:0046167">
    <property type="term" value="P:glycerol-3-phosphate biosynthetic process"/>
    <property type="evidence" value="ECO:0007669"/>
    <property type="project" value="UniProtKB-UniRule"/>
</dbReference>
<dbReference type="GO" id="GO:0046168">
    <property type="term" value="P:glycerol-3-phosphate catabolic process"/>
    <property type="evidence" value="ECO:0007669"/>
    <property type="project" value="InterPro"/>
</dbReference>
<dbReference type="GO" id="GO:0006650">
    <property type="term" value="P:glycerophospholipid metabolic process"/>
    <property type="evidence" value="ECO:0007669"/>
    <property type="project" value="UniProtKB-UniRule"/>
</dbReference>
<dbReference type="GO" id="GO:0008654">
    <property type="term" value="P:phospholipid biosynthetic process"/>
    <property type="evidence" value="ECO:0007669"/>
    <property type="project" value="UniProtKB-KW"/>
</dbReference>
<dbReference type="FunFam" id="1.10.1040.10:FF:000001">
    <property type="entry name" value="Glycerol-3-phosphate dehydrogenase [NAD(P)+]"/>
    <property type="match status" value="1"/>
</dbReference>
<dbReference type="FunFam" id="3.40.50.720:FF:000019">
    <property type="entry name" value="Glycerol-3-phosphate dehydrogenase [NAD(P)+]"/>
    <property type="match status" value="1"/>
</dbReference>
<dbReference type="Gene3D" id="1.10.1040.10">
    <property type="entry name" value="N-(1-d-carboxylethyl)-l-norvaline Dehydrogenase, domain 2"/>
    <property type="match status" value="1"/>
</dbReference>
<dbReference type="Gene3D" id="3.40.50.720">
    <property type="entry name" value="NAD(P)-binding Rossmann-like Domain"/>
    <property type="match status" value="1"/>
</dbReference>
<dbReference type="HAMAP" id="MF_00394">
    <property type="entry name" value="NAD_Glyc3P_dehydrog"/>
    <property type="match status" value="1"/>
</dbReference>
<dbReference type="InterPro" id="IPR008927">
    <property type="entry name" value="6-PGluconate_DH-like_C_sf"/>
</dbReference>
<dbReference type="InterPro" id="IPR013328">
    <property type="entry name" value="6PGD_dom2"/>
</dbReference>
<dbReference type="InterPro" id="IPR006168">
    <property type="entry name" value="G3P_DH_NAD-dep"/>
</dbReference>
<dbReference type="InterPro" id="IPR006109">
    <property type="entry name" value="G3P_DH_NAD-dep_C"/>
</dbReference>
<dbReference type="InterPro" id="IPR011128">
    <property type="entry name" value="G3P_DH_NAD-dep_N"/>
</dbReference>
<dbReference type="InterPro" id="IPR036291">
    <property type="entry name" value="NAD(P)-bd_dom_sf"/>
</dbReference>
<dbReference type="NCBIfam" id="NF000940">
    <property type="entry name" value="PRK00094.1-2"/>
    <property type="match status" value="1"/>
</dbReference>
<dbReference type="NCBIfam" id="NF000942">
    <property type="entry name" value="PRK00094.1-4"/>
    <property type="match status" value="1"/>
</dbReference>
<dbReference type="PANTHER" id="PTHR11728">
    <property type="entry name" value="GLYCEROL-3-PHOSPHATE DEHYDROGENASE"/>
    <property type="match status" value="1"/>
</dbReference>
<dbReference type="PANTHER" id="PTHR11728:SF1">
    <property type="entry name" value="GLYCEROL-3-PHOSPHATE DEHYDROGENASE [NAD(+)] 2, CHLOROPLASTIC"/>
    <property type="match status" value="1"/>
</dbReference>
<dbReference type="Pfam" id="PF07479">
    <property type="entry name" value="NAD_Gly3P_dh_C"/>
    <property type="match status" value="1"/>
</dbReference>
<dbReference type="Pfam" id="PF01210">
    <property type="entry name" value="NAD_Gly3P_dh_N"/>
    <property type="match status" value="1"/>
</dbReference>
<dbReference type="PIRSF" id="PIRSF000114">
    <property type="entry name" value="Glycerol-3-P_dh"/>
    <property type="match status" value="1"/>
</dbReference>
<dbReference type="PRINTS" id="PR00077">
    <property type="entry name" value="GPDHDRGNASE"/>
</dbReference>
<dbReference type="SUPFAM" id="SSF48179">
    <property type="entry name" value="6-phosphogluconate dehydrogenase C-terminal domain-like"/>
    <property type="match status" value="1"/>
</dbReference>
<dbReference type="SUPFAM" id="SSF51735">
    <property type="entry name" value="NAD(P)-binding Rossmann-fold domains"/>
    <property type="match status" value="1"/>
</dbReference>
<dbReference type="PROSITE" id="PS00957">
    <property type="entry name" value="NAD_G3PDH"/>
    <property type="match status" value="1"/>
</dbReference>
<accession>A5FPU2</accession>
<feature type="chain" id="PRO_1000080306" description="Glycerol-3-phosphate dehydrogenase [NAD(P)+]">
    <location>
        <begin position="1"/>
        <end position="359"/>
    </location>
</feature>
<feature type="active site" description="Proton acceptor" evidence="1">
    <location>
        <position position="193"/>
    </location>
</feature>
<feature type="binding site" evidence="1">
    <location>
        <position position="11"/>
    </location>
    <ligand>
        <name>NADPH</name>
        <dbReference type="ChEBI" id="CHEBI:57783"/>
    </ligand>
</feature>
<feature type="binding site" evidence="1">
    <location>
        <position position="12"/>
    </location>
    <ligand>
        <name>NADPH</name>
        <dbReference type="ChEBI" id="CHEBI:57783"/>
    </ligand>
</feature>
<feature type="binding site" evidence="1">
    <location>
        <position position="32"/>
    </location>
    <ligand>
        <name>NADPH</name>
        <dbReference type="ChEBI" id="CHEBI:57783"/>
    </ligand>
</feature>
<feature type="binding site" evidence="1">
    <location>
        <position position="107"/>
    </location>
    <ligand>
        <name>NADPH</name>
        <dbReference type="ChEBI" id="CHEBI:57783"/>
    </ligand>
</feature>
<feature type="binding site" evidence="1">
    <location>
        <position position="107"/>
    </location>
    <ligand>
        <name>sn-glycerol 3-phosphate</name>
        <dbReference type="ChEBI" id="CHEBI:57597"/>
    </ligand>
</feature>
<feature type="binding site" evidence="1">
    <location>
        <position position="138"/>
    </location>
    <ligand>
        <name>sn-glycerol 3-phosphate</name>
        <dbReference type="ChEBI" id="CHEBI:57597"/>
    </ligand>
</feature>
<feature type="binding site" evidence="1">
    <location>
        <position position="142"/>
    </location>
    <ligand>
        <name>NADPH</name>
        <dbReference type="ChEBI" id="CHEBI:57783"/>
    </ligand>
</feature>
<feature type="binding site" evidence="1">
    <location>
        <position position="193"/>
    </location>
    <ligand>
        <name>sn-glycerol 3-phosphate</name>
        <dbReference type="ChEBI" id="CHEBI:57597"/>
    </ligand>
</feature>
<feature type="binding site" evidence="1">
    <location>
        <position position="246"/>
    </location>
    <ligand>
        <name>sn-glycerol 3-phosphate</name>
        <dbReference type="ChEBI" id="CHEBI:57597"/>
    </ligand>
</feature>
<feature type="binding site" evidence="1">
    <location>
        <position position="256"/>
    </location>
    <ligand>
        <name>sn-glycerol 3-phosphate</name>
        <dbReference type="ChEBI" id="CHEBI:57597"/>
    </ligand>
</feature>
<feature type="binding site" evidence="1">
    <location>
        <position position="257"/>
    </location>
    <ligand>
        <name>NADPH</name>
        <dbReference type="ChEBI" id="CHEBI:57783"/>
    </ligand>
</feature>
<feature type="binding site" evidence="1">
    <location>
        <position position="257"/>
    </location>
    <ligand>
        <name>sn-glycerol 3-phosphate</name>
        <dbReference type="ChEBI" id="CHEBI:57597"/>
    </ligand>
</feature>
<feature type="binding site" evidence="1">
    <location>
        <position position="258"/>
    </location>
    <ligand>
        <name>sn-glycerol 3-phosphate</name>
        <dbReference type="ChEBI" id="CHEBI:57597"/>
    </ligand>
</feature>
<feature type="binding site" evidence="1">
    <location>
        <position position="281"/>
    </location>
    <ligand>
        <name>NADPH</name>
        <dbReference type="ChEBI" id="CHEBI:57783"/>
    </ligand>
</feature>
<feature type="binding site" evidence="1">
    <location>
        <position position="283"/>
    </location>
    <ligand>
        <name>NADPH</name>
        <dbReference type="ChEBI" id="CHEBI:57783"/>
    </ligand>
</feature>